<comment type="function">
    <text evidence="1">Together with its co-chaperonin GroES, plays an essential role in assisting protein folding. The GroEL-GroES system forms a nano-cage that allows encapsulation of the non-native substrate proteins and provides a physical environment optimized to promote and accelerate protein folding.</text>
</comment>
<comment type="catalytic activity">
    <reaction evidence="1">
        <text>ATP + H2O + a folded polypeptide = ADP + phosphate + an unfolded polypeptide.</text>
        <dbReference type="EC" id="5.6.1.7"/>
    </reaction>
</comment>
<comment type="subunit">
    <text evidence="1">Forms a cylinder of 14 subunits composed of two heptameric rings stacked back-to-back. Interacts with the co-chaperonin GroES.</text>
</comment>
<comment type="subcellular location">
    <subcellularLocation>
        <location evidence="1">Cytoplasm</location>
    </subcellularLocation>
</comment>
<comment type="similarity">
    <text evidence="1">Belongs to the chaperonin (HSP60) family.</text>
</comment>
<evidence type="ECO:0000255" key="1">
    <source>
        <dbReference type="HAMAP-Rule" id="MF_00600"/>
    </source>
</evidence>
<accession>A8YTH8</accession>
<proteinExistence type="inferred from homology"/>
<name>CH60_LACH4</name>
<feature type="chain" id="PRO_1000072632" description="Chaperonin GroEL">
    <location>
        <begin position="1"/>
        <end position="540"/>
    </location>
</feature>
<feature type="binding site" evidence="1">
    <location>
        <begin position="29"/>
        <end position="32"/>
    </location>
    <ligand>
        <name>ATP</name>
        <dbReference type="ChEBI" id="CHEBI:30616"/>
    </ligand>
</feature>
<feature type="binding site" evidence="1">
    <location>
        <begin position="86"/>
        <end position="90"/>
    </location>
    <ligand>
        <name>ATP</name>
        <dbReference type="ChEBI" id="CHEBI:30616"/>
    </ligand>
</feature>
<feature type="binding site" evidence="1">
    <location>
        <position position="413"/>
    </location>
    <ligand>
        <name>ATP</name>
        <dbReference type="ChEBI" id="CHEBI:30616"/>
    </ligand>
</feature>
<feature type="binding site" evidence="1">
    <location>
        <begin position="477"/>
        <end position="479"/>
    </location>
    <ligand>
        <name>ATP</name>
        <dbReference type="ChEBI" id="CHEBI:30616"/>
    </ligand>
</feature>
<feature type="binding site" evidence="1">
    <location>
        <position position="493"/>
    </location>
    <ligand>
        <name>ATP</name>
        <dbReference type="ChEBI" id="CHEBI:30616"/>
    </ligand>
</feature>
<reference key="1">
    <citation type="journal article" date="2008" name="J. Bacteriol.">
        <title>Genome sequence of Lactobacillus helveticus: an organism distinguished by selective gene loss and IS element expansion.</title>
        <authorList>
            <person name="Callanan M."/>
            <person name="Kaleta P."/>
            <person name="O'Callaghan J."/>
            <person name="O'Sullivan O."/>
            <person name="Jordan K."/>
            <person name="McAuliffe O."/>
            <person name="Sangrador-Vegas A."/>
            <person name="Slattery L."/>
            <person name="Fitzgerald G.F."/>
            <person name="Beresford T."/>
            <person name="Ross R.P."/>
        </authorList>
    </citation>
    <scope>NUCLEOTIDE SEQUENCE [LARGE SCALE GENOMIC DNA]</scope>
    <source>
        <strain>DPC 4571</strain>
    </source>
</reference>
<gene>
    <name evidence="1" type="primary">groEL</name>
    <name evidence="1" type="synonym">groL</name>
    <name type="ordered locus">lhv_0426</name>
</gene>
<organism>
    <name type="scientific">Lactobacillus helveticus (strain DPC 4571)</name>
    <dbReference type="NCBI Taxonomy" id="405566"/>
    <lineage>
        <taxon>Bacteria</taxon>
        <taxon>Bacillati</taxon>
        <taxon>Bacillota</taxon>
        <taxon>Bacilli</taxon>
        <taxon>Lactobacillales</taxon>
        <taxon>Lactobacillaceae</taxon>
        <taxon>Lactobacillus</taxon>
    </lineage>
</organism>
<protein>
    <recommendedName>
        <fullName evidence="1">Chaperonin GroEL</fullName>
        <ecNumber evidence="1">5.6.1.7</ecNumber>
    </recommendedName>
    <alternativeName>
        <fullName evidence="1">60 kDa chaperonin</fullName>
    </alternativeName>
    <alternativeName>
        <fullName evidence="1">Chaperonin-60</fullName>
        <shortName evidence="1">Cpn60</shortName>
    </alternativeName>
</protein>
<sequence length="540" mass="57726">MAKDIKFSENARRSLLKGVDKLADTVKTTIGPKGRNVVLEQSYGNPDITNDGVTIAKSIELKDRYENMGAKLVAEAAQKTNDIAGDGTTTATVLTQAIVREGMKNVTAGANPVGIRRGIEKATKAAVDELHKISHKVESKDQIANVAAVSSASKEVGALIADAMEKVGHDGVITIEDSRGINTELSVVEGMQFDRGYLSQYMVTDNDKMEADLDNPYILITDKKISNIQDILPLLQEIVQQGKSLLIIADDITGEALPTLVLNKIRGTFNVVAVKAPGFGDRRKAQLQDIAALTGGTVITEDLGLELKDTKIDQLGQARRITVTKDSTTIVDGAGSKEAIDERVDTIRKQIEDSTSDFDKKKLQERLAKLTGGVAVIHVGAATETELKERRYRIEDALNSTRAAVDEGYVAGGGTALVNVEKAVREVKGETTDEQTGINIVLRALSAPVRQIAENAGKDGSVILDKLEHQENEIGYNAATDKWENMVDAGIIDPTKVTRTALQNAASIAALLLTTEAVVAEIPEPKQSAPQGGAGAPMGM</sequence>
<keyword id="KW-0067">ATP-binding</keyword>
<keyword id="KW-0143">Chaperone</keyword>
<keyword id="KW-0963">Cytoplasm</keyword>
<keyword id="KW-0413">Isomerase</keyword>
<keyword id="KW-0547">Nucleotide-binding</keyword>
<dbReference type="EC" id="5.6.1.7" evidence="1"/>
<dbReference type="EMBL" id="CP000517">
    <property type="protein sequence ID" value="ABX26634.1"/>
    <property type="molecule type" value="Genomic_DNA"/>
</dbReference>
<dbReference type="RefSeq" id="WP_012211438.1">
    <property type="nucleotide sequence ID" value="NC_010080.1"/>
</dbReference>
<dbReference type="SMR" id="A8YTH8"/>
<dbReference type="KEGG" id="lhe:lhv_0426"/>
<dbReference type="eggNOG" id="COG0459">
    <property type="taxonomic scope" value="Bacteria"/>
</dbReference>
<dbReference type="HOGENOM" id="CLU_016503_3_0_9"/>
<dbReference type="Proteomes" id="UP000000790">
    <property type="component" value="Chromosome"/>
</dbReference>
<dbReference type="GO" id="GO:0005737">
    <property type="term" value="C:cytoplasm"/>
    <property type="evidence" value="ECO:0007669"/>
    <property type="project" value="UniProtKB-SubCell"/>
</dbReference>
<dbReference type="GO" id="GO:0005524">
    <property type="term" value="F:ATP binding"/>
    <property type="evidence" value="ECO:0007669"/>
    <property type="project" value="UniProtKB-UniRule"/>
</dbReference>
<dbReference type="GO" id="GO:0140662">
    <property type="term" value="F:ATP-dependent protein folding chaperone"/>
    <property type="evidence" value="ECO:0007669"/>
    <property type="project" value="InterPro"/>
</dbReference>
<dbReference type="GO" id="GO:0016853">
    <property type="term" value="F:isomerase activity"/>
    <property type="evidence" value="ECO:0007669"/>
    <property type="project" value="UniProtKB-KW"/>
</dbReference>
<dbReference type="GO" id="GO:0051082">
    <property type="term" value="F:unfolded protein binding"/>
    <property type="evidence" value="ECO:0007669"/>
    <property type="project" value="UniProtKB-UniRule"/>
</dbReference>
<dbReference type="GO" id="GO:0042026">
    <property type="term" value="P:protein refolding"/>
    <property type="evidence" value="ECO:0007669"/>
    <property type="project" value="UniProtKB-UniRule"/>
</dbReference>
<dbReference type="CDD" id="cd03344">
    <property type="entry name" value="GroEL"/>
    <property type="match status" value="1"/>
</dbReference>
<dbReference type="FunFam" id="3.50.7.10:FF:000001">
    <property type="entry name" value="60 kDa chaperonin"/>
    <property type="match status" value="1"/>
</dbReference>
<dbReference type="Gene3D" id="3.50.7.10">
    <property type="entry name" value="GroEL"/>
    <property type="match status" value="1"/>
</dbReference>
<dbReference type="Gene3D" id="1.10.560.10">
    <property type="entry name" value="GroEL-like equatorial domain"/>
    <property type="match status" value="1"/>
</dbReference>
<dbReference type="Gene3D" id="3.30.260.10">
    <property type="entry name" value="TCP-1-like chaperonin intermediate domain"/>
    <property type="match status" value="1"/>
</dbReference>
<dbReference type="HAMAP" id="MF_00600">
    <property type="entry name" value="CH60"/>
    <property type="match status" value="1"/>
</dbReference>
<dbReference type="InterPro" id="IPR018370">
    <property type="entry name" value="Chaperonin_Cpn60_CS"/>
</dbReference>
<dbReference type="InterPro" id="IPR001844">
    <property type="entry name" value="Cpn60/GroEL"/>
</dbReference>
<dbReference type="InterPro" id="IPR002423">
    <property type="entry name" value="Cpn60/GroEL/TCP-1"/>
</dbReference>
<dbReference type="InterPro" id="IPR027409">
    <property type="entry name" value="GroEL-like_apical_dom_sf"/>
</dbReference>
<dbReference type="InterPro" id="IPR027413">
    <property type="entry name" value="GROEL-like_equatorial_sf"/>
</dbReference>
<dbReference type="InterPro" id="IPR027410">
    <property type="entry name" value="TCP-1-like_intermed_sf"/>
</dbReference>
<dbReference type="NCBIfam" id="TIGR02348">
    <property type="entry name" value="GroEL"/>
    <property type="match status" value="1"/>
</dbReference>
<dbReference type="NCBIfam" id="NF000592">
    <property type="entry name" value="PRK00013.1"/>
    <property type="match status" value="1"/>
</dbReference>
<dbReference type="NCBIfam" id="NF009487">
    <property type="entry name" value="PRK12849.1"/>
    <property type="match status" value="1"/>
</dbReference>
<dbReference type="NCBIfam" id="NF009488">
    <property type="entry name" value="PRK12850.1"/>
    <property type="match status" value="1"/>
</dbReference>
<dbReference type="NCBIfam" id="NF009489">
    <property type="entry name" value="PRK12851.1"/>
    <property type="match status" value="1"/>
</dbReference>
<dbReference type="PANTHER" id="PTHR45633">
    <property type="entry name" value="60 KDA HEAT SHOCK PROTEIN, MITOCHONDRIAL"/>
    <property type="match status" value="1"/>
</dbReference>
<dbReference type="Pfam" id="PF00118">
    <property type="entry name" value="Cpn60_TCP1"/>
    <property type="match status" value="1"/>
</dbReference>
<dbReference type="PRINTS" id="PR00298">
    <property type="entry name" value="CHAPERONIN60"/>
</dbReference>
<dbReference type="SUPFAM" id="SSF52029">
    <property type="entry name" value="GroEL apical domain-like"/>
    <property type="match status" value="1"/>
</dbReference>
<dbReference type="SUPFAM" id="SSF48592">
    <property type="entry name" value="GroEL equatorial domain-like"/>
    <property type="match status" value="1"/>
</dbReference>
<dbReference type="SUPFAM" id="SSF54849">
    <property type="entry name" value="GroEL-intermediate domain like"/>
    <property type="match status" value="1"/>
</dbReference>
<dbReference type="PROSITE" id="PS00296">
    <property type="entry name" value="CHAPERONINS_CPN60"/>
    <property type="match status" value="1"/>
</dbReference>